<name>NDHI_DELBI</name>
<proteinExistence type="inferred from homology"/>
<geneLocation type="chloroplast"/>
<keyword id="KW-0004">4Fe-4S</keyword>
<keyword id="KW-0150">Chloroplast</keyword>
<keyword id="KW-0408">Iron</keyword>
<keyword id="KW-0411">Iron-sulfur</keyword>
<keyword id="KW-0472">Membrane</keyword>
<keyword id="KW-0479">Metal-binding</keyword>
<keyword id="KW-0520">NAD</keyword>
<keyword id="KW-0521">NADP</keyword>
<keyword id="KW-0934">Plastid</keyword>
<keyword id="KW-0618">Plastoquinone</keyword>
<keyword id="KW-0874">Quinone</keyword>
<keyword id="KW-0677">Repeat</keyword>
<keyword id="KW-0793">Thylakoid</keyword>
<keyword id="KW-1278">Translocase</keyword>
<organism>
    <name type="scientific">Delilia biflora</name>
    <name type="common">Delilia berteroi</name>
    <dbReference type="NCBI Taxonomy" id="183020"/>
    <lineage>
        <taxon>Eukaryota</taxon>
        <taxon>Viridiplantae</taxon>
        <taxon>Streptophyta</taxon>
        <taxon>Embryophyta</taxon>
        <taxon>Tracheophyta</taxon>
        <taxon>Spermatophyta</taxon>
        <taxon>Magnoliopsida</taxon>
        <taxon>eudicotyledons</taxon>
        <taxon>Gunneridae</taxon>
        <taxon>Pentapetalae</taxon>
        <taxon>asterids</taxon>
        <taxon>campanulids</taxon>
        <taxon>Asterales</taxon>
        <taxon>Asteraceae</taxon>
        <taxon>Asteroideae</taxon>
        <taxon>Heliantheae alliance</taxon>
        <taxon>Heliantheae</taxon>
        <taxon>Delilia</taxon>
    </lineage>
</organism>
<feature type="chain" id="PRO_0000250775" description="NAD(P)H-quinone oxidoreductase subunit I, chloroplastic">
    <location>
        <begin position="1"/>
        <end position="166"/>
    </location>
</feature>
<feature type="domain" description="4Fe-4S ferredoxin-type 1" evidence="1">
    <location>
        <begin position="55"/>
        <end position="84"/>
    </location>
</feature>
<feature type="domain" description="4Fe-4S ferredoxin-type 2" evidence="1">
    <location>
        <begin position="95"/>
        <end position="124"/>
    </location>
</feature>
<feature type="binding site" evidence="1">
    <location>
        <position position="64"/>
    </location>
    <ligand>
        <name>[4Fe-4S] cluster</name>
        <dbReference type="ChEBI" id="CHEBI:49883"/>
        <label>1</label>
    </ligand>
</feature>
<feature type="binding site" evidence="1">
    <location>
        <position position="67"/>
    </location>
    <ligand>
        <name>[4Fe-4S] cluster</name>
        <dbReference type="ChEBI" id="CHEBI:49883"/>
        <label>1</label>
    </ligand>
</feature>
<feature type="binding site" evidence="1">
    <location>
        <position position="70"/>
    </location>
    <ligand>
        <name>[4Fe-4S] cluster</name>
        <dbReference type="ChEBI" id="CHEBI:49883"/>
        <label>1</label>
    </ligand>
</feature>
<feature type="binding site" evidence="1">
    <location>
        <position position="74"/>
    </location>
    <ligand>
        <name>[4Fe-4S] cluster</name>
        <dbReference type="ChEBI" id="CHEBI:49883"/>
        <label>2</label>
    </ligand>
</feature>
<feature type="binding site" evidence="1">
    <location>
        <position position="104"/>
    </location>
    <ligand>
        <name>[4Fe-4S] cluster</name>
        <dbReference type="ChEBI" id="CHEBI:49883"/>
        <label>2</label>
    </ligand>
</feature>
<feature type="binding site" evidence="1">
    <location>
        <position position="107"/>
    </location>
    <ligand>
        <name>[4Fe-4S] cluster</name>
        <dbReference type="ChEBI" id="CHEBI:49883"/>
        <label>2</label>
    </ligand>
</feature>
<feature type="binding site" evidence="1">
    <location>
        <position position="110"/>
    </location>
    <ligand>
        <name>[4Fe-4S] cluster</name>
        <dbReference type="ChEBI" id="CHEBI:49883"/>
        <label>2</label>
    </ligand>
</feature>
<feature type="binding site" evidence="1">
    <location>
        <position position="114"/>
    </location>
    <ligand>
        <name>[4Fe-4S] cluster</name>
        <dbReference type="ChEBI" id="CHEBI:49883"/>
        <label>1</label>
    </ligand>
</feature>
<sequence>MFPMVTEFMNYGQQTVRAARYIGQGFMITLSHANRLPVTIQYPYEKLITSERFRGRIHFEFDKCIACEVCVRVCPIDLPVVDWKLETDIRKKRLLNYSIDFGICIFCGNCVEYCPTNCLSMTEEYELSTYDRHELNYNQIALGRLPMSIIDDYTIRTILNLPEIKN</sequence>
<reference key="1">
    <citation type="submission" date="2003-01" db="EMBL/GenBank/DDBJ databases">
        <title>Chloroplast DNA phylogeny of tribe Heliantheae (Asteraceae).</title>
        <authorList>
            <person name="Panero J.L."/>
            <person name="Baldwin B.G."/>
            <person name="Schilling E.E."/>
            <person name="Clevinger J.A."/>
        </authorList>
    </citation>
    <scope>NUCLEOTIDE SEQUENCE [GENOMIC DNA]</scope>
</reference>
<comment type="function">
    <text evidence="1">NDH shuttles electrons from NAD(P)H:plastoquinone, via FMN and iron-sulfur (Fe-S) centers, to quinones in the photosynthetic chain and possibly in a chloroplast respiratory chain. The immediate electron acceptor for the enzyme in this species is believed to be plastoquinone. Couples the redox reaction to proton translocation, and thus conserves the redox energy in a proton gradient.</text>
</comment>
<comment type="catalytic activity">
    <reaction evidence="1">
        <text>a plastoquinone + NADH + (n+1) H(+)(in) = a plastoquinol + NAD(+) + n H(+)(out)</text>
        <dbReference type="Rhea" id="RHEA:42608"/>
        <dbReference type="Rhea" id="RHEA-COMP:9561"/>
        <dbReference type="Rhea" id="RHEA-COMP:9562"/>
        <dbReference type="ChEBI" id="CHEBI:15378"/>
        <dbReference type="ChEBI" id="CHEBI:17757"/>
        <dbReference type="ChEBI" id="CHEBI:57540"/>
        <dbReference type="ChEBI" id="CHEBI:57945"/>
        <dbReference type="ChEBI" id="CHEBI:62192"/>
    </reaction>
</comment>
<comment type="catalytic activity">
    <reaction evidence="1">
        <text>a plastoquinone + NADPH + (n+1) H(+)(in) = a plastoquinol + NADP(+) + n H(+)(out)</text>
        <dbReference type="Rhea" id="RHEA:42612"/>
        <dbReference type="Rhea" id="RHEA-COMP:9561"/>
        <dbReference type="Rhea" id="RHEA-COMP:9562"/>
        <dbReference type="ChEBI" id="CHEBI:15378"/>
        <dbReference type="ChEBI" id="CHEBI:17757"/>
        <dbReference type="ChEBI" id="CHEBI:57783"/>
        <dbReference type="ChEBI" id="CHEBI:58349"/>
        <dbReference type="ChEBI" id="CHEBI:62192"/>
    </reaction>
</comment>
<comment type="cofactor">
    <cofactor evidence="1">
        <name>[4Fe-4S] cluster</name>
        <dbReference type="ChEBI" id="CHEBI:49883"/>
    </cofactor>
    <text evidence="1">Binds 2 [4Fe-4S] clusters per subunit.</text>
</comment>
<comment type="subunit">
    <text evidence="1">NDH is composed of at least 16 different subunits, 5 of which are encoded in the nucleus.</text>
</comment>
<comment type="subcellular location">
    <subcellularLocation>
        <location evidence="1">Plastid</location>
        <location evidence="1">Chloroplast thylakoid membrane</location>
        <topology evidence="1">Peripheral membrane protein</topology>
    </subcellularLocation>
</comment>
<comment type="similarity">
    <text evidence="1">Belongs to the complex I 23 kDa subunit family.</text>
</comment>
<gene>
    <name evidence="1" type="primary">ndhI</name>
</gene>
<dbReference type="EC" id="7.1.1.-" evidence="1"/>
<dbReference type="EMBL" id="AF383772">
    <property type="protein sequence ID" value="AAN61714.1"/>
    <property type="molecule type" value="Genomic_DNA"/>
</dbReference>
<dbReference type="SMR" id="Q8HVU0"/>
<dbReference type="GO" id="GO:0009535">
    <property type="term" value="C:chloroplast thylakoid membrane"/>
    <property type="evidence" value="ECO:0007669"/>
    <property type="project" value="UniProtKB-SubCell"/>
</dbReference>
<dbReference type="GO" id="GO:0051539">
    <property type="term" value="F:4 iron, 4 sulfur cluster binding"/>
    <property type="evidence" value="ECO:0007669"/>
    <property type="project" value="UniProtKB-KW"/>
</dbReference>
<dbReference type="GO" id="GO:0005506">
    <property type="term" value="F:iron ion binding"/>
    <property type="evidence" value="ECO:0007669"/>
    <property type="project" value="UniProtKB-UniRule"/>
</dbReference>
<dbReference type="GO" id="GO:0008137">
    <property type="term" value="F:NADH dehydrogenase (ubiquinone) activity"/>
    <property type="evidence" value="ECO:0007669"/>
    <property type="project" value="InterPro"/>
</dbReference>
<dbReference type="GO" id="GO:0048038">
    <property type="term" value="F:quinone binding"/>
    <property type="evidence" value="ECO:0007669"/>
    <property type="project" value="UniProtKB-KW"/>
</dbReference>
<dbReference type="GO" id="GO:0019684">
    <property type="term" value="P:photosynthesis, light reaction"/>
    <property type="evidence" value="ECO:0007669"/>
    <property type="project" value="UniProtKB-UniRule"/>
</dbReference>
<dbReference type="FunFam" id="3.30.70.3270:FF:000006">
    <property type="entry name" value="NAD(P)H-quinone oxidoreductase subunit I, chloroplastic"/>
    <property type="match status" value="1"/>
</dbReference>
<dbReference type="Gene3D" id="3.30.70.3270">
    <property type="match status" value="1"/>
</dbReference>
<dbReference type="HAMAP" id="MF_01351">
    <property type="entry name" value="NDH1_NuoI"/>
    <property type="match status" value="1"/>
</dbReference>
<dbReference type="InterPro" id="IPR017896">
    <property type="entry name" value="4Fe4S_Fe-S-bd"/>
</dbReference>
<dbReference type="InterPro" id="IPR017900">
    <property type="entry name" value="4Fe4S_Fe_S_CS"/>
</dbReference>
<dbReference type="InterPro" id="IPR010226">
    <property type="entry name" value="NADH_quinone_OxRdtase_chainI"/>
</dbReference>
<dbReference type="InterPro" id="IPR004497">
    <property type="entry name" value="NDHI"/>
</dbReference>
<dbReference type="NCBIfam" id="TIGR00403">
    <property type="entry name" value="ndhI"/>
    <property type="match status" value="1"/>
</dbReference>
<dbReference type="NCBIfam" id="TIGR01971">
    <property type="entry name" value="NuoI"/>
    <property type="match status" value="1"/>
</dbReference>
<dbReference type="NCBIfam" id="NF004537">
    <property type="entry name" value="PRK05888.1-3"/>
    <property type="match status" value="1"/>
</dbReference>
<dbReference type="PANTHER" id="PTHR47275">
    <property type="entry name" value="NAD(P)H-QUINONE OXIDOREDUCTASE SUBUNIT I, CHLOROPLASTIC"/>
    <property type="match status" value="1"/>
</dbReference>
<dbReference type="PANTHER" id="PTHR47275:SF1">
    <property type="entry name" value="NAD(P)H-QUINONE OXIDOREDUCTASE SUBUNIT I, CHLOROPLASTIC"/>
    <property type="match status" value="1"/>
</dbReference>
<dbReference type="Pfam" id="PF00037">
    <property type="entry name" value="Fer4"/>
    <property type="match status" value="2"/>
</dbReference>
<dbReference type="SUPFAM" id="SSF54862">
    <property type="entry name" value="4Fe-4S ferredoxins"/>
    <property type="match status" value="1"/>
</dbReference>
<dbReference type="PROSITE" id="PS00198">
    <property type="entry name" value="4FE4S_FER_1"/>
    <property type="match status" value="2"/>
</dbReference>
<dbReference type="PROSITE" id="PS51379">
    <property type="entry name" value="4FE4S_FER_2"/>
    <property type="match status" value="2"/>
</dbReference>
<evidence type="ECO:0000255" key="1">
    <source>
        <dbReference type="HAMAP-Rule" id="MF_01351"/>
    </source>
</evidence>
<protein>
    <recommendedName>
        <fullName evidence="1">NAD(P)H-quinone oxidoreductase subunit I, chloroplastic</fullName>
        <ecNumber evidence="1">7.1.1.-</ecNumber>
    </recommendedName>
    <alternativeName>
        <fullName evidence="1">NAD(P)H dehydrogenase subunit I</fullName>
        <shortName evidence="1">NDH subunit I</shortName>
    </alternativeName>
    <alternativeName>
        <fullName evidence="1">NADH-plastoquinone oxidoreductase subunit I</fullName>
    </alternativeName>
</protein>
<accession>Q8HVU0</accession>